<reference key="1">
    <citation type="journal article" date="2010" name="J. Bacteriol.">
        <title>Whole genome sequences of two Xylella fastidiosa strains (M12 and M23) causing almond leaf scorch disease in California.</title>
        <authorList>
            <person name="Chen J."/>
            <person name="Xie G."/>
            <person name="Han S."/>
            <person name="Chertkov O."/>
            <person name="Sims D."/>
            <person name="Civerolo E.L."/>
        </authorList>
    </citation>
    <scope>NUCLEOTIDE SEQUENCE [LARGE SCALE GENOMIC DNA]</scope>
    <source>
        <strain>M23</strain>
    </source>
</reference>
<accession>B2I9R4</accession>
<protein>
    <recommendedName>
        <fullName evidence="1">Succinate--CoA ligase [ADP-forming] subunit beta</fullName>
        <ecNumber evidence="1">6.2.1.5</ecNumber>
    </recommendedName>
    <alternativeName>
        <fullName evidence="1">Succinyl-CoA synthetase subunit beta</fullName>
        <shortName evidence="1">SCS-beta</shortName>
    </alternativeName>
</protein>
<comment type="function">
    <text evidence="1">Succinyl-CoA synthetase functions in the citric acid cycle (TCA), coupling the hydrolysis of succinyl-CoA to the synthesis of either ATP or GTP and thus represents the only step of substrate-level phosphorylation in the TCA. The beta subunit provides nucleotide specificity of the enzyme and binds the substrate succinate, while the binding sites for coenzyme A and phosphate are found in the alpha subunit.</text>
</comment>
<comment type="catalytic activity">
    <reaction evidence="1">
        <text>succinate + ATP + CoA = succinyl-CoA + ADP + phosphate</text>
        <dbReference type="Rhea" id="RHEA:17661"/>
        <dbReference type="ChEBI" id="CHEBI:30031"/>
        <dbReference type="ChEBI" id="CHEBI:30616"/>
        <dbReference type="ChEBI" id="CHEBI:43474"/>
        <dbReference type="ChEBI" id="CHEBI:57287"/>
        <dbReference type="ChEBI" id="CHEBI:57292"/>
        <dbReference type="ChEBI" id="CHEBI:456216"/>
        <dbReference type="EC" id="6.2.1.5"/>
    </reaction>
    <physiologicalReaction direction="right-to-left" evidence="1">
        <dbReference type="Rhea" id="RHEA:17663"/>
    </physiologicalReaction>
</comment>
<comment type="catalytic activity">
    <reaction evidence="1">
        <text>GTP + succinate + CoA = succinyl-CoA + GDP + phosphate</text>
        <dbReference type="Rhea" id="RHEA:22120"/>
        <dbReference type="ChEBI" id="CHEBI:30031"/>
        <dbReference type="ChEBI" id="CHEBI:37565"/>
        <dbReference type="ChEBI" id="CHEBI:43474"/>
        <dbReference type="ChEBI" id="CHEBI:57287"/>
        <dbReference type="ChEBI" id="CHEBI:57292"/>
        <dbReference type="ChEBI" id="CHEBI:58189"/>
    </reaction>
    <physiologicalReaction direction="right-to-left" evidence="1">
        <dbReference type="Rhea" id="RHEA:22122"/>
    </physiologicalReaction>
</comment>
<comment type="cofactor">
    <cofactor evidence="1">
        <name>Mg(2+)</name>
        <dbReference type="ChEBI" id="CHEBI:18420"/>
    </cofactor>
    <text evidence="1">Binds 1 Mg(2+) ion per subunit.</text>
</comment>
<comment type="pathway">
    <text evidence="1">Carbohydrate metabolism; tricarboxylic acid cycle; succinate from succinyl-CoA (ligase route): step 1/1.</text>
</comment>
<comment type="subunit">
    <text evidence="1">Heterotetramer of two alpha and two beta subunits.</text>
</comment>
<comment type="similarity">
    <text evidence="1">Belongs to the succinate/malate CoA ligase beta subunit family.</text>
</comment>
<organism>
    <name type="scientific">Xylella fastidiosa (strain M23)</name>
    <dbReference type="NCBI Taxonomy" id="405441"/>
    <lineage>
        <taxon>Bacteria</taxon>
        <taxon>Pseudomonadati</taxon>
        <taxon>Pseudomonadota</taxon>
        <taxon>Gammaproteobacteria</taxon>
        <taxon>Lysobacterales</taxon>
        <taxon>Lysobacteraceae</taxon>
        <taxon>Xylella</taxon>
    </lineage>
</organism>
<feature type="chain" id="PRO_1000129240" description="Succinate--CoA ligase [ADP-forming] subunit beta">
    <location>
        <begin position="1"/>
        <end position="387"/>
    </location>
</feature>
<feature type="domain" description="ATP-grasp" evidence="1">
    <location>
        <begin position="9"/>
        <end position="244"/>
    </location>
</feature>
<feature type="binding site" evidence="1">
    <location>
        <position position="46"/>
    </location>
    <ligand>
        <name>ATP</name>
        <dbReference type="ChEBI" id="CHEBI:30616"/>
    </ligand>
</feature>
<feature type="binding site" evidence="1">
    <location>
        <begin position="53"/>
        <end position="55"/>
    </location>
    <ligand>
        <name>ATP</name>
        <dbReference type="ChEBI" id="CHEBI:30616"/>
    </ligand>
</feature>
<feature type="binding site" evidence="1">
    <location>
        <position position="102"/>
    </location>
    <ligand>
        <name>ATP</name>
        <dbReference type="ChEBI" id="CHEBI:30616"/>
    </ligand>
</feature>
<feature type="binding site" evidence="1">
    <location>
        <position position="107"/>
    </location>
    <ligand>
        <name>ATP</name>
        <dbReference type="ChEBI" id="CHEBI:30616"/>
    </ligand>
</feature>
<feature type="binding site" evidence="1">
    <location>
        <position position="199"/>
    </location>
    <ligand>
        <name>Mg(2+)</name>
        <dbReference type="ChEBI" id="CHEBI:18420"/>
    </ligand>
</feature>
<feature type="binding site" evidence="1">
    <location>
        <position position="213"/>
    </location>
    <ligand>
        <name>Mg(2+)</name>
        <dbReference type="ChEBI" id="CHEBI:18420"/>
    </ligand>
</feature>
<feature type="binding site" evidence="1">
    <location>
        <position position="264"/>
    </location>
    <ligand>
        <name>substrate</name>
        <note>ligand shared with subunit alpha</note>
    </ligand>
</feature>
<feature type="binding site" evidence="1">
    <location>
        <begin position="321"/>
        <end position="323"/>
    </location>
    <ligand>
        <name>substrate</name>
        <note>ligand shared with subunit alpha</note>
    </ligand>
</feature>
<gene>
    <name evidence="1" type="primary">sucC</name>
    <name type="ordered locus">XfasM23_2037</name>
</gene>
<sequence length="387" mass="41018">MNFHEYQAKQLFAEYGIPVPAGRIASSADEAVTAAKSLGNGPWMVKAQIHAGGRGKAGGVKFCKTTDEVKQAAATMLGTKMATYQSAGVALPVNLVLVTEAGEITKELYLSVLVDRGTRSITYIASSEGGVDIEHVAAETPEKIQTLNVDFVEGLQPYQGRDIGFHLGLEAKQVNQLSKIMISLYQLFNDKDLSLIELNPLAILSNGDLYALDGKINSDDNATFRHKELAAMRDKTQEDETEVLASENDLNYVTMDGNIGCMVNGAGLAMATMDVIKLNGGEPANFLDVGGGATKERVTTAFKLILSSNKVKAIFVNIFGGIVRCDMIAEGIIAAVKEVGVKVPVIVRLEGTNVDAGKQLLATSGLAIIPADDINDGAKKAVAAVTV</sequence>
<keyword id="KW-0067">ATP-binding</keyword>
<keyword id="KW-0436">Ligase</keyword>
<keyword id="KW-0460">Magnesium</keyword>
<keyword id="KW-0479">Metal-binding</keyword>
<keyword id="KW-0547">Nucleotide-binding</keyword>
<keyword id="KW-0816">Tricarboxylic acid cycle</keyword>
<name>SUCC_XYLF2</name>
<proteinExistence type="inferred from homology"/>
<dbReference type="EC" id="6.2.1.5" evidence="1"/>
<dbReference type="EMBL" id="CP001011">
    <property type="protein sequence ID" value="ACB93435.1"/>
    <property type="molecule type" value="Genomic_DNA"/>
</dbReference>
<dbReference type="RefSeq" id="WP_004090371.1">
    <property type="nucleotide sequence ID" value="NC_010577.1"/>
</dbReference>
<dbReference type="SMR" id="B2I9R4"/>
<dbReference type="KEGG" id="xfn:XfasM23_2037"/>
<dbReference type="HOGENOM" id="CLU_037430_0_2_6"/>
<dbReference type="UniPathway" id="UPA00223">
    <property type="reaction ID" value="UER00999"/>
</dbReference>
<dbReference type="Proteomes" id="UP000001698">
    <property type="component" value="Chromosome"/>
</dbReference>
<dbReference type="GO" id="GO:0042709">
    <property type="term" value="C:succinate-CoA ligase complex"/>
    <property type="evidence" value="ECO:0007669"/>
    <property type="project" value="TreeGrafter"/>
</dbReference>
<dbReference type="GO" id="GO:0005524">
    <property type="term" value="F:ATP binding"/>
    <property type="evidence" value="ECO:0007669"/>
    <property type="project" value="UniProtKB-UniRule"/>
</dbReference>
<dbReference type="GO" id="GO:0000287">
    <property type="term" value="F:magnesium ion binding"/>
    <property type="evidence" value="ECO:0007669"/>
    <property type="project" value="UniProtKB-UniRule"/>
</dbReference>
<dbReference type="GO" id="GO:0004775">
    <property type="term" value="F:succinate-CoA ligase (ADP-forming) activity"/>
    <property type="evidence" value="ECO:0007669"/>
    <property type="project" value="UniProtKB-UniRule"/>
</dbReference>
<dbReference type="GO" id="GO:0004776">
    <property type="term" value="F:succinate-CoA ligase (GDP-forming) activity"/>
    <property type="evidence" value="ECO:0007669"/>
    <property type="project" value="RHEA"/>
</dbReference>
<dbReference type="GO" id="GO:0006104">
    <property type="term" value="P:succinyl-CoA metabolic process"/>
    <property type="evidence" value="ECO:0007669"/>
    <property type="project" value="TreeGrafter"/>
</dbReference>
<dbReference type="GO" id="GO:0006099">
    <property type="term" value="P:tricarboxylic acid cycle"/>
    <property type="evidence" value="ECO:0007669"/>
    <property type="project" value="UniProtKB-UniRule"/>
</dbReference>
<dbReference type="FunFam" id="3.30.1490.20:FF:000002">
    <property type="entry name" value="Succinate--CoA ligase [ADP-forming] subunit beta"/>
    <property type="match status" value="1"/>
</dbReference>
<dbReference type="FunFam" id="3.30.470.20:FF:000002">
    <property type="entry name" value="Succinate--CoA ligase [ADP-forming] subunit beta"/>
    <property type="match status" value="1"/>
</dbReference>
<dbReference type="FunFam" id="3.40.50.261:FF:000001">
    <property type="entry name" value="Succinate--CoA ligase [ADP-forming] subunit beta"/>
    <property type="match status" value="1"/>
</dbReference>
<dbReference type="Gene3D" id="3.30.1490.20">
    <property type="entry name" value="ATP-grasp fold, A domain"/>
    <property type="match status" value="1"/>
</dbReference>
<dbReference type="Gene3D" id="3.30.470.20">
    <property type="entry name" value="ATP-grasp fold, B domain"/>
    <property type="match status" value="1"/>
</dbReference>
<dbReference type="Gene3D" id="3.40.50.261">
    <property type="entry name" value="Succinyl-CoA synthetase domains"/>
    <property type="match status" value="1"/>
</dbReference>
<dbReference type="HAMAP" id="MF_00558">
    <property type="entry name" value="Succ_CoA_beta"/>
    <property type="match status" value="1"/>
</dbReference>
<dbReference type="InterPro" id="IPR011761">
    <property type="entry name" value="ATP-grasp"/>
</dbReference>
<dbReference type="InterPro" id="IPR013650">
    <property type="entry name" value="ATP-grasp_succ-CoA_synth-type"/>
</dbReference>
<dbReference type="InterPro" id="IPR013815">
    <property type="entry name" value="ATP_grasp_subdomain_1"/>
</dbReference>
<dbReference type="InterPro" id="IPR017866">
    <property type="entry name" value="Succ-CoA_synthase_bsu_CS"/>
</dbReference>
<dbReference type="InterPro" id="IPR005811">
    <property type="entry name" value="SUCC_ACL_C"/>
</dbReference>
<dbReference type="InterPro" id="IPR005809">
    <property type="entry name" value="Succ_CoA_ligase-like_bsu"/>
</dbReference>
<dbReference type="InterPro" id="IPR016102">
    <property type="entry name" value="Succinyl-CoA_synth-like"/>
</dbReference>
<dbReference type="NCBIfam" id="NF001913">
    <property type="entry name" value="PRK00696.1"/>
    <property type="match status" value="1"/>
</dbReference>
<dbReference type="NCBIfam" id="TIGR01016">
    <property type="entry name" value="sucCoAbeta"/>
    <property type="match status" value="1"/>
</dbReference>
<dbReference type="PANTHER" id="PTHR11815:SF10">
    <property type="entry name" value="SUCCINATE--COA LIGASE [GDP-FORMING] SUBUNIT BETA, MITOCHONDRIAL"/>
    <property type="match status" value="1"/>
</dbReference>
<dbReference type="PANTHER" id="PTHR11815">
    <property type="entry name" value="SUCCINYL-COA SYNTHETASE BETA CHAIN"/>
    <property type="match status" value="1"/>
</dbReference>
<dbReference type="Pfam" id="PF08442">
    <property type="entry name" value="ATP-grasp_2"/>
    <property type="match status" value="1"/>
</dbReference>
<dbReference type="Pfam" id="PF00549">
    <property type="entry name" value="Ligase_CoA"/>
    <property type="match status" value="1"/>
</dbReference>
<dbReference type="PIRSF" id="PIRSF001554">
    <property type="entry name" value="SucCS_beta"/>
    <property type="match status" value="1"/>
</dbReference>
<dbReference type="SUPFAM" id="SSF56059">
    <property type="entry name" value="Glutathione synthetase ATP-binding domain-like"/>
    <property type="match status" value="1"/>
</dbReference>
<dbReference type="SUPFAM" id="SSF52210">
    <property type="entry name" value="Succinyl-CoA synthetase domains"/>
    <property type="match status" value="1"/>
</dbReference>
<dbReference type="PROSITE" id="PS50975">
    <property type="entry name" value="ATP_GRASP"/>
    <property type="match status" value="1"/>
</dbReference>
<dbReference type="PROSITE" id="PS01217">
    <property type="entry name" value="SUCCINYL_COA_LIG_3"/>
    <property type="match status" value="1"/>
</dbReference>
<evidence type="ECO:0000255" key="1">
    <source>
        <dbReference type="HAMAP-Rule" id="MF_00558"/>
    </source>
</evidence>